<comment type="subcellular location">
    <subcellularLocation>
        <location evidence="1">Periplasm</location>
    </subcellularLocation>
</comment>
<comment type="similarity">
    <text evidence="1">Belongs to the UPF0312 family. Type 1 subfamily.</text>
</comment>
<organism>
    <name type="scientific">Salmonella agona (strain SL483)</name>
    <dbReference type="NCBI Taxonomy" id="454166"/>
    <lineage>
        <taxon>Bacteria</taxon>
        <taxon>Pseudomonadati</taxon>
        <taxon>Pseudomonadota</taxon>
        <taxon>Gammaproteobacteria</taxon>
        <taxon>Enterobacterales</taxon>
        <taxon>Enterobacteriaceae</taxon>
        <taxon>Salmonella</taxon>
    </lineage>
</organism>
<keyword id="KW-0574">Periplasm</keyword>
<keyword id="KW-0732">Signal</keyword>
<dbReference type="EMBL" id="CP001138">
    <property type="protein sequence ID" value="ACH51689.1"/>
    <property type="molecule type" value="Genomic_DNA"/>
</dbReference>
<dbReference type="RefSeq" id="WP_000739881.1">
    <property type="nucleotide sequence ID" value="NC_011149.1"/>
</dbReference>
<dbReference type="SMR" id="B5F951"/>
<dbReference type="KEGG" id="sea:SeAg_B2032"/>
<dbReference type="HOGENOM" id="CLU_071003_1_2_6"/>
<dbReference type="Proteomes" id="UP000008819">
    <property type="component" value="Chromosome"/>
</dbReference>
<dbReference type="GO" id="GO:0042597">
    <property type="term" value="C:periplasmic space"/>
    <property type="evidence" value="ECO:0007669"/>
    <property type="project" value="UniProtKB-SubCell"/>
</dbReference>
<dbReference type="Gene3D" id="2.40.128.110">
    <property type="entry name" value="Lipid/polyisoprenoid-binding, YceI-like"/>
    <property type="match status" value="1"/>
</dbReference>
<dbReference type="HAMAP" id="MF_00780">
    <property type="entry name" value="UPF0312"/>
    <property type="match status" value="1"/>
</dbReference>
<dbReference type="InterPro" id="IPR007372">
    <property type="entry name" value="Lipid/polyisoprenoid-bd_YceI"/>
</dbReference>
<dbReference type="InterPro" id="IPR036761">
    <property type="entry name" value="TTHA0802/YceI-like_sf"/>
</dbReference>
<dbReference type="InterPro" id="IPR023480">
    <property type="entry name" value="UPF0312/YceI"/>
</dbReference>
<dbReference type="NCBIfam" id="NF002994">
    <property type="entry name" value="PRK03757.1"/>
    <property type="match status" value="1"/>
</dbReference>
<dbReference type="PANTHER" id="PTHR34406">
    <property type="entry name" value="PROTEIN YCEI"/>
    <property type="match status" value="1"/>
</dbReference>
<dbReference type="PANTHER" id="PTHR34406:SF1">
    <property type="entry name" value="PROTEIN YCEI"/>
    <property type="match status" value="1"/>
</dbReference>
<dbReference type="Pfam" id="PF04264">
    <property type="entry name" value="YceI"/>
    <property type="match status" value="1"/>
</dbReference>
<dbReference type="SMART" id="SM00867">
    <property type="entry name" value="YceI"/>
    <property type="match status" value="1"/>
</dbReference>
<dbReference type="SUPFAM" id="SSF101874">
    <property type="entry name" value="YceI-like"/>
    <property type="match status" value="1"/>
</dbReference>
<accession>B5F951</accession>
<gene>
    <name evidence="1" type="primary">yceI</name>
    <name type="ordered locus">SeAg_B2032</name>
</gene>
<reference key="1">
    <citation type="journal article" date="2011" name="J. Bacteriol.">
        <title>Comparative genomics of 28 Salmonella enterica isolates: evidence for CRISPR-mediated adaptive sublineage evolution.</title>
        <authorList>
            <person name="Fricke W.F."/>
            <person name="Mammel M.K."/>
            <person name="McDermott P.F."/>
            <person name="Tartera C."/>
            <person name="White D.G."/>
            <person name="Leclerc J.E."/>
            <person name="Ravel J."/>
            <person name="Cebula T.A."/>
        </authorList>
    </citation>
    <scope>NUCLEOTIDE SEQUENCE [LARGE SCALE GENOMIC DNA]</scope>
    <source>
        <strain>SL483</strain>
    </source>
</reference>
<proteinExistence type="inferred from homology"/>
<name>YCEI_SALA4</name>
<evidence type="ECO:0000255" key="1">
    <source>
        <dbReference type="HAMAP-Rule" id="MF_00780"/>
    </source>
</evidence>
<sequence>MKKNLLGFTFASLLFTTGSAVAAEYKIDKEGQHAFVNFRIQHLGYSWLYGTFKDFDGTFTFDEKNPSADKVNVTINTNSVDTNHAERDKHLRSAEFLNVAKFPQATFTSTSVKKEGDELDITGNLTLNGVTKPVTLEAKLMGQGDDPWGGKRAGFEAEGKIKLKDFNITTDLGPASQEVELIISVEGVQQK</sequence>
<feature type="signal peptide" evidence="1">
    <location>
        <begin position="1"/>
        <end position="22"/>
    </location>
</feature>
<feature type="chain" id="PRO_1000200476" description="Protein YceI">
    <location>
        <begin position="23"/>
        <end position="191"/>
    </location>
</feature>
<protein>
    <recommendedName>
        <fullName evidence="1">Protein YceI</fullName>
    </recommendedName>
</protein>